<feature type="chain" id="PRO_0000130502" description="Large ribosomal subunit protein uL29">
    <location>
        <begin position="1"/>
        <end position="65"/>
    </location>
</feature>
<reference key="1">
    <citation type="journal article" date="2003" name="J. Bacteriol.">
        <title>Comparative analyses of the complete genome sequences of Pierce's disease and citrus variegated chlorosis strains of Xylella fastidiosa.</title>
        <authorList>
            <person name="Van Sluys M.A."/>
            <person name="de Oliveira M.C."/>
            <person name="Monteiro-Vitorello C.B."/>
            <person name="Miyaki C.Y."/>
            <person name="Furlan L.R."/>
            <person name="Camargo L.E.A."/>
            <person name="da Silva A.C.R."/>
            <person name="Moon D.H."/>
            <person name="Takita M.A."/>
            <person name="Lemos E.G.M."/>
            <person name="Machado M.A."/>
            <person name="Ferro M.I.T."/>
            <person name="da Silva F.R."/>
            <person name="Goldman M.H.S."/>
            <person name="Goldman G.H."/>
            <person name="Lemos M.V.F."/>
            <person name="El-Dorry H."/>
            <person name="Tsai S.M."/>
            <person name="Carrer H."/>
            <person name="Carraro D.M."/>
            <person name="de Oliveira R.C."/>
            <person name="Nunes L.R."/>
            <person name="Siqueira W.J."/>
            <person name="Coutinho L.L."/>
            <person name="Kimura E.T."/>
            <person name="Ferro E.S."/>
            <person name="Harakava R."/>
            <person name="Kuramae E.E."/>
            <person name="Marino C.L."/>
            <person name="Giglioti E."/>
            <person name="Abreu I.L."/>
            <person name="Alves L.M.C."/>
            <person name="do Amaral A.M."/>
            <person name="Baia G.S."/>
            <person name="Blanco S.R."/>
            <person name="Brito M.S."/>
            <person name="Cannavan F.S."/>
            <person name="Celestino A.V."/>
            <person name="da Cunha A.F."/>
            <person name="Fenille R.C."/>
            <person name="Ferro J.A."/>
            <person name="Formighieri E.F."/>
            <person name="Kishi L.T."/>
            <person name="Leoni S.G."/>
            <person name="Oliveira A.R."/>
            <person name="Rosa V.E. Jr."/>
            <person name="Sassaki F.T."/>
            <person name="Sena J.A.D."/>
            <person name="de Souza A.A."/>
            <person name="Truffi D."/>
            <person name="Tsukumo F."/>
            <person name="Yanai G.M."/>
            <person name="Zaros L.G."/>
            <person name="Civerolo E.L."/>
            <person name="Simpson A.J.G."/>
            <person name="Almeida N.F. Jr."/>
            <person name="Setubal J.C."/>
            <person name="Kitajima J.P."/>
        </authorList>
    </citation>
    <scope>NUCLEOTIDE SEQUENCE [LARGE SCALE GENOMIC DNA]</scope>
    <source>
        <strain>Temecula1 / ATCC 700964</strain>
    </source>
</reference>
<organism>
    <name type="scientific">Xylella fastidiosa (strain Temecula1 / ATCC 700964)</name>
    <dbReference type="NCBI Taxonomy" id="183190"/>
    <lineage>
        <taxon>Bacteria</taxon>
        <taxon>Pseudomonadati</taxon>
        <taxon>Pseudomonadota</taxon>
        <taxon>Gammaproteobacteria</taxon>
        <taxon>Lysobacterales</taxon>
        <taxon>Lysobacteraceae</taxon>
        <taxon>Xylella</taxon>
    </lineage>
</organism>
<name>RL29_XYLFT</name>
<comment type="similarity">
    <text evidence="1">Belongs to the universal ribosomal protein uL29 family.</text>
</comment>
<proteinExistence type="inferred from homology"/>
<dbReference type="EMBL" id="AE009442">
    <property type="protein sequence ID" value="AAO28324.1"/>
    <property type="molecule type" value="Genomic_DNA"/>
</dbReference>
<dbReference type="RefSeq" id="WP_004090108.1">
    <property type="nucleotide sequence ID" value="NC_004556.1"/>
</dbReference>
<dbReference type="SMR" id="Q87E74"/>
<dbReference type="GeneID" id="93904147"/>
<dbReference type="KEGG" id="xft:PD_0445"/>
<dbReference type="HOGENOM" id="CLU_158491_1_2_6"/>
<dbReference type="Proteomes" id="UP000002516">
    <property type="component" value="Chromosome"/>
</dbReference>
<dbReference type="GO" id="GO:0022625">
    <property type="term" value="C:cytosolic large ribosomal subunit"/>
    <property type="evidence" value="ECO:0007669"/>
    <property type="project" value="TreeGrafter"/>
</dbReference>
<dbReference type="GO" id="GO:0003735">
    <property type="term" value="F:structural constituent of ribosome"/>
    <property type="evidence" value="ECO:0007669"/>
    <property type="project" value="InterPro"/>
</dbReference>
<dbReference type="GO" id="GO:0006412">
    <property type="term" value="P:translation"/>
    <property type="evidence" value="ECO:0007669"/>
    <property type="project" value="UniProtKB-UniRule"/>
</dbReference>
<dbReference type="CDD" id="cd00427">
    <property type="entry name" value="Ribosomal_L29_HIP"/>
    <property type="match status" value="1"/>
</dbReference>
<dbReference type="FunFam" id="1.10.287.310:FF:000001">
    <property type="entry name" value="50S ribosomal protein L29"/>
    <property type="match status" value="1"/>
</dbReference>
<dbReference type="Gene3D" id="1.10.287.310">
    <property type="match status" value="1"/>
</dbReference>
<dbReference type="HAMAP" id="MF_00374">
    <property type="entry name" value="Ribosomal_uL29"/>
    <property type="match status" value="1"/>
</dbReference>
<dbReference type="InterPro" id="IPR050063">
    <property type="entry name" value="Ribosomal_protein_uL29"/>
</dbReference>
<dbReference type="InterPro" id="IPR001854">
    <property type="entry name" value="Ribosomal_uL29"/>
</dbReference>
<dbReference type="InterPro" id="IPR018254">
    <property type="entry name" value="Ribosomal_uL29_CS"/>
</dbReference>
<dbReference type="InterPro" id="IPR036049">
    <property type="entry name" value="Ribosomal_uL29_sf"/>
</dbReference>
<dbReference type="NCBIfam" id="TIGR00012">
    <property type="entry name" value="L29"/>
    <property type="match status" value="1"/>
</dbReference>
<dbReference type="PANTHER" id="PTHR10916">
    <property type="entry name" value="60S RIBOSOMAL PROTEIN L35/50S RIBOSOMAL PROTEIN L29"/>
    <property type="match status" value="1"/>
</dbReference>
<dbReference type="PANTHER" id="PTHR10916:SF0">
    <property type="entry name" value="LARGE RIBOSOMAL SUBUNIT PROTEIN UL29C"/>
    <property type="match status" value="1"/>
</dbReference>
<dbReference type="Pfam" id="PF00831">
    <property type="entry name" value="Ribosomal_L29"/>
    <property type="match status" value="1"/>
</dbReference>
<dbReference type="SUPFAM" id="SSF46561">
    <property type="entry name" value="Ribosomal protein L29 (L29p)"/>
    <property type="match status" value="1"/>
</dbReference>
<dbReference type="PROSITE" id="PS00579">
    <property type="entry name" value="RIBOSOMAL_L29"/>
    <property type="match status" value="1"/>
</dbReference>
<sequence length="65" mass="7871">MDIQQFRGKSVDDLKAHLIELRKEQFSMRMQVAMGQFQKTHEIRRVRRNIARVKYLLSWINRTPA</sequence>
<keyword id="KW-1185">Reference proteome</keyword>
<keyword id="KW-0687">Ribonucleoprotein</keyword>
<keyword id="KW-0689">Ribosomal protein</keyword>
<gene>
    <name evidence="1" type="primary">rpmC</name>
    <name type="ordered locus">PD_0445</name>
</gene>
<accession>Q87E74</accession>
<evidence type="ECO:0000255" key="1">
    <source>
        <dbReference type="HAMAP-Rule" id="MF_00374"/>
    </source>
</evidence>
<evidence type="ECO:0000305" key="2"/>
<protein>
    <recommendedName>
        <fullName evidence="1">Large ribosomal subunit protein uL29</fullName>
    </recommendedName>
    <alternativeName>
        <fullName evidence="2">50S ribosomal protein L29</fullName>
    </alternativeName>
</protein>